<accession>A6WY74</accession>
<dbReference type="EC" id="3.1.21.10" evidence="1"/>
<dbReference type="EMBL" id="CP000758">
    <property type="protein sequence ID" value="ABS13928.1"/>
    <property type="molecule type" value="Genomic_DNA"/>
</dbReference>
<dbReference type="RefSeq" id="WP_010661380.1">
    <property type="nucleotide sequence ID" value="NC_009667.1"/>
</dbReference>
<dbReference type="SMR" id="A6WY74"/>
<dbReference type="STRING" id="439375.Oant_1211"/>
<dbReference type="GeneID" id="61318302"/>
<dbReference type="KEGG" id="oan:Oant_1211"/>
<dbReference type="eggNOG" id="COG0817">
    <property type="taxonomic scope" value="Bacteria"/>
</dbReference>
<dbReference type="HOGENOM" id="CLU_091257_1_0_5"/>
<dbReference type="PhylomeDB" id="A6WY74"/>
<dbReference type="Proteomes" id="UP000002301">
    <property type="component" value="Chromosome 1"/>
</dbReference>
<dbReference type="GO" id="GO:0005737">
    <property type="term" value="C:cytoplasm"/>
    <property type="evidence" value="ECO:0007669"/>
    <property type="project" value="UniProtKB-SubCell"/>
</dbReference>
<dbReference type="GO" id="GO:0048476">
    <property type="term" value="C:Holliday junction resolvase complex"/>
    <property type="evidence" value="ECO:0007669"/>
    <property type="project" value="UniProtKB-UniRule"/>
</dbReference>
<dbReference type="GO" id="GO:0008821">
    <property type="term" value="F:crossover junction DNA endonuclease activity"/>
    <property type="evidence" value="ECO:0007669"/>
    <property type="project" value="UniProtKB-UniRule"/>
</dbReference>
<dbReference type="GO" id="GO:0003677">
    <property type="term" value="F:DNA binding"/>
    <property type="evidence" value="ECO:0007669"/>
    <property type="project" value="UniProtKB-KW"/>
</dbReference>
<dbReference type="GO" id="GO:0000287">
    <property type="term" value="F:magnesium ion binding"/>
    <property type="evidence" value="ECO:0007669"/>
    <property type="project" value="UniProtKB-UniRule"/>
</dbReference>
<dbReference type="GO" id="GO:0006310">
    <property type="term" value="P:DNA recombination"/>
    <property type="evidence" value="ECO:0007669"/>
    <property type="project" value="UniProtKB-UniRule"/>
</dbReference>
<dbReference type="GO" id="GO:0006281">
    <property type="term" value="P:DNA repair"/>
    <property type="evidence" value="ECO:0007669"/>
    <property type="project" value="UniProtKB-UniRule"/>
</dbReference>
<dbReference type="CDD" id="cd16962">
    <property type="entry name" value="RuvC"/>
    <property type="match status" value="1"/>
</dbReference>
<dbReference type="FunFam" id="3.30.420.10:FF:000002">
    <property type="entry name" value="Crossover junction endodeoxyribonuclease RuvC"/>
    <property type="match status" value="1"/>
</dbReference>
<dbReference type="Gene3D" id="3.30.420.10">
    <property type="entry name" value="Ribonuclease H-like superfamily/Ribonuclease H"/>
    <property type="match status" value="1"/>
</dbReference>
<dbReference type="HAMAP" id="MF_00034">
    <property type="entry name" value="RuvC"/>
    <property type="match status" value="1"/>
</dbReference>
<dbReference type="InterPro" id="IPR012337">
    <property type="entry name" value="RNaseH-like_sf"/>
</dbReference>
<dbReference type="InterPro" id="IPR036397">
    <property type="entry name" value="RNaseH_sf"/>
</dbReference>
<dbReference type="InterPro" id="IPR020563">
    <property type="entry name" value="X-over_junc_endoDNase_Mg_BS"/>
</dbReference>
<dbReference type="InterPro" id="IPR002176">
    <property type="entry name" value="X-over_junc_endoDNase_RuvC"/>
</dbReference>
<dbReference type="NCBIfam" id="TIGR00228">
    <property type="entry name" value="ruvC"/>
    <property type="match status" value="1"/>
</dbReference>
<dbReference type="PANTHER" id="PTHR30194">
    <property type="entry name" value="CROSSOVER JUNCTION ENDODEOXYRIBONUCLEASE RUVC"/>
    <property type="match status" value="1"/>
</dbReference>
<dbReference type="PANTHER" id="PTHR30194:SF3">
    <property type="entry name" value="CROSSOVER JUNCTION ENDODEOXYRIBONUCLEASE RUVC"/>
    <property type="match status" value="1"/>
</dbReference>
<dbReference type="Pfam" id="PF02075">
    <property type="entry name" value="RuvC"/>
    <property type="match status" value="1"/>
</dbReference>
<dbReference type="PRINTS" id="PR00696">
    <property type="entry name" value="RSOLVASERUVC"/>
</dbReference>
<dbReference type="SUPFAM" id="SSF53098">
    <property type="entry name" value="Ribonuclease H-like"/>
    <property type="match status" value="1"/>
</dbReference>
<dbReference type="PROSITE" id="PS01321">
    <property type="entry name" value="RUVC"/>
    <property type="match status" value="1"/>
</dbReference>
<protein>
    <recommendedName>
        <fullName evidence="1">Crossover junction endodeoxyribonuclease RuvC</fullName>
        <ecNumber evidence="1">3.1.21.10</ecNumber>
    </recommendedName>
    <alternativeName>
        <fullName evidence="1">Holliday junction nuclease RuvC</fullName>
    </alternativeName>
    <alternativeName>
        <fullName evidence="1">Holliday junction resolvase RuvC</fullName>
    </alternativeName>
</protein>
<evidence type="ECO:0000255" key="1">
    <source>
        <dbReference type="HAMAP-Rule" id="MF_00034"/>
    </source>
</evidence>
<keyword id="KW-0963">Cytoplasm</keyword>
<keyword id="KW-0227">DNA damage</keyword>
<keyword id="KW-0233">DNA recombination</keyword>
<keyword id="KW-0234">DNA repair</keyword>
<keyword id="KW-0238">DNA-binding</keyword>
<keyword id="KW-0255">Endonuclease</keyword>
<keyword id="KW-0378">Hydrolase</keyword>
<keyword id="KW-0460">Magnesium</keyword>
<keyword id="KW-0479">Metal-binding</keyword>
<keyword id="KW-0540">Nuclease</keyword>
<keyword id="KW-1185">Reference proteome</keyword>
<proteinExistence type="inferred from homology"/>
<feature type="chain" id="PRO_1000002786" description="Crossover junction endodeoxyribonuclease RuvC">
    <location>
        <begin position="1"/>
        <end position="172"/>
    </location>
</feature>
<feature type="active site" evidence="1">
    <location>
        <position position="11"/>
    </location>
</feature>
<feature type="active site" evidence="1">
    <location>
        <position position="71"/>
    </location>
</feature>
<feature type="active site" evidence="1">
    <location>
        <position position="143"/>
    </location>
</feature>
<feature type="binding site" evidence="1">
    <location>
        <position position="11"/>
    </location>
    <ligand>
        <name>Mg(2+)</name>
        <dbReference type="ChEBI" id="CHEBI:18420"/>
        <label>1</label>
    </ligand>
</feature>
<feature type="binding site" evidence="1">
    <location>
        <position position="71"/>
    </location>
    <ligand>
        <name>Mg(2+)</name>
        <dbReference type="ChEBI" id="CHEBI:18420"/>
        <label>2</label>
    </ligand>
</feature>
<feature type="binding site" evidence="1">
    <location>
        <position position="143"/>
    </location>
    <ligand>
        <name>Mg(2+)</name>
        <dbReference type="ChEBI" id="CHEBI:18420"/>
        <label>1</label>
    </ligand>
</feature>
<name>RUVC_BRUA4</name>
<sequence>MKETIRIIGIDPGLRRTGWGIVESLGNSLHFIGSGTVTSNAEMDLASRLCQLHEGLSKVLHEYMPHEAAVEHTFVNKDATATLKLGQARGIALLAPAQAGLPVAEYAPNAVKKAVIGVGHGEKQQIHMMVKVLMPRASFDTSDAADALAIAICHAHHRQSIASARRLQQLIA</sequence>
<gene>
    <name evidence="1" type="primary">ruvC</name>
    <name type="ordered locus">Oant_1211</name>
</gene>
<comment type="function">
    <text evidence="1">The RuvA-RuvB-RuvC complex processes Holliday junction (HJ) DNA during genetic recombination and DNA repair. Endonuclease that resolves HJ intermediates. Cleaves cruciform DNA by making single-stranded nicks across the HJ at symmetrical positions within the homologous arms, yielding a 5'-phosphate and a 3'-hydroxyl group; requires a central core of homology in the junction. The consensus cleavage sequence is 5'-(A/T)TT(C/G)-3'. Cleavage occurs on the 3'-side of the TT dinucleotide at the point of strand exchange. HJ branch migration catalyzed by RuvA-RuvB allows RuvC to scan DNA until it finds its consensus sequence, where it cleaves and resolves the cruciform DNA.</text>
</comment>
<comment type="catalytic activity">
    <reaction evidence="1">
        <text>Endonucleolytic cleavage at a junction such as a reciprocal single-stranded crossover between two homologous DNA duplexes (Holliday junction).</text>
        <dbReference type="EC" id="3.1.21.10"/>
    </reaction>
</comment>
<comment type="cofactor">
    <cofactor evidence="1">
        <name>Mg(2+)</name>
        <dbReference type="ChEBI" id="CHEBI:18420"/>
    </cofactor>
    <text evidence="1">Binds 2 Mg(2+) ion per subunit.</text>
</comment>
<comment type="subunit">
    <text evidence="1">Homodimer which binds Holliday junction (HJ) DNA. The HJ becomes 2-fold symmetrical on binding to RuvC with unstacked arms; it has a different conformation from HJ DNA in complex with RuvA. In the full resolvosome a probable DNA-RuvA(4)-RuvB(12)-RuvC(2) complex forms which resolves the HJ.</text>
</comment>
<comment type="subcellular location">
    <subcellularLocation>
        <location evidence="1">Cytoplasm</location>
    </subcellularLocation>
</comment>
<comment type="similarity">
    <text evidence="1">Belongs to the RuvC family.</text>
</comment>
<reference key="1">
    <citation type="journal article" date="2011" name="J. Bacteriol.">
        <title>Genome of Ochrobactrum anthropi ATCC 49188 T, a versatile opportunistic pathogen and symbiont of several eukaryotic hosts.</title>
        <authorList>
            <person name="Chain P.S."/>
            <person name="Lang D.M."/>
            <person name="Comerci D.J."/>
            <person name="Malfatti S.A."/>
            <person name="Vergez L.M."/>
            <person name="Shin M."/>
            <person name="Ugalde R.A."/>
            <person name="Garcia E."/>
            <person name="Tolmasky M.E."/>
        </authorList>
    </citation>
    <scope>NUCLEOTIDE SEQUENCE [LARGE SCALE GENOMIC DNA]</scope>
    <source>
        <strain>ATCC 49188 / DSM 6882 / CCUG 24695 / JCM 21032 / LMG 3331 / NBRC 15819 / NCTC 12168 / Alc 37</strain>
    </source>
</reference>
<organism>
    <name type="scientific">Brucella anthropi (strain ATCC 49188 / DSM 6882 / CCUG 24695 / JCM 21032 / LMG 3331 / NBRC 15819 / NCTC 12168 / Alc 37)</name>
    <name type="common">Ochrobactrum anthropi</name>
    <dbReference type="NCBI Taxonomy" id="439375"/>
    <lineage>
        <taxon>Bacteria</taxon>
        <taxon>Pseudomonadati</taxon>
        <taxon>Pseudomonadota</taxon>
        <taxon>Alphaproteobacteria</taxon>
        <taxon>Hyphomicrobiales</taxon>
        <taxon>Brucellaceae</taxon>
        <taxon>Brucella/Ochrobactrum group</taxon>
        <taxon>Brucella</taxon>
    </lineage>
</organism>